<keyword id="KW-1003">Cell membrane</keyword>
<keyword id="KW-0966">Cell projection</keyword>
<keyword id="KW-0968">Cytoplasmic vesicle</keyword>
<keyword id="KW-1015">Disulfide bond</keyword>
<keyword id="KW-0325">Glycoprotein</keyword>
<keyword id="KW-0407">Ion channel</keyword>
<keyword id="KW-0406">Ion transport</keyword>
<keyword id="KW-1071">Ligand-gated ion channel</keyword>
<keyword id="KW-0472">Membrane</keyword>
<keyword id="KW-1185">Reference proteome</keyword>
<keyword id="KW-0732">Signal</keyword>
<keyword id="KW-0770">Synapse</keyword>
<keyword id="KW-0812">Transmembrane</keyword>
<keyword id="KW-1133">Transmembrane helix</keyword>
<keyword id="KW-0813">Transport</keyword>
<comment type="function">
    <text evidence="5">Probable component of a ligand-gated anion channel. Negatively regulates synaptic transmission and synaptic vesicle release in response to acetylcholine in cholinergic motor neurons. Role in synaptic vesicle release kinetics may be in association with the ligand-gated ion channel protein acc-4.</text>
</comment>
<comment type="subcellular location">
    <subcellularLocation>
        <location evidence="5">Presynaptic cell membrane</location>
        <topology evidence="2">Multi-pass membrane protein</topology>
    </subcellularLocation>
    <subcellularLocation>
        <location evidence="5">Cell projection</location>
        <location evidence="5">Axon</location>
    </subcellularLocation>
    <subcellularLocation>
        <location evidence="5">Cytoplasmic vesicle</location>
        <location evidence="5">Secretory vesicle</location>
        <location evidence="5">Synaptic vesicle</location>
    </subcellularLocation>
</comment>
<comment type="tissue specificity">
    <text evidence="5">Expressed in the nervous system, with high expression in cholinergic motor neurons and weak expression in GABAergic motor neurons.</text>
</comment>
<comment type="developmental stage">
    <text evidence="5">Expressed in the dorsal nerve cord of L1 larva and on the dorsal side only of L4 larva and adults.</text>
</comment>
<comment type="disruption phenotype">
    <text evidence="5">Viable, with normal growth, reproduction and locomotion. Increased sensitivity to the acetylcholine esterase inhibitor aldicarb, but normal sensitivity to levamisole, an agonist for postsynaptic acetylcholine receptors on muscles. In response to induced acetylcholine release, the amplitude and rise phase of excitatory postsynaptic currents (eEPSCs) during synaptic transmission is as wild-type, but there is prolonged and slow decay of eEPSCs during the late phase of synaptic transmission, which results in increased release of synaptic vesicles in cholinergic motor neurons.</text>
</comment>
<comment type="similarity">
    <text evidence="6">Belongs to the ligand-gated ion channel (TC 1.A.9) family.</text>
</comment>
<evidence type="ECO:0000250" key="1">
    <source>
        <dbReference type="UniProtKB" id="P02712"/>
    </source>
</evidence>
<evidence type="ECO:0000255" key="2"/>
<evidence type="ECO:0000255" key="3">
    <source>
        <dbReference type="PROSITE-ProRule" id="PRU00498"/>
    </source>
</evidence>
<evidence type="ECO:0000256" key="4">
    <source>
        <dbReference type="SAM" id="MobiDB-lite"/>
    </source>
</evidence>
<evidence type="ECO:0000269" key="5">
    <source>
    </source>
</evidence>
<evidence type="ECO:0000305" key="6"/>
<evidence type="ECO:0000312" key="7">
    <source>
        <dbReference type="Proteomes" id="UP000001940"/>
    </source>
</evidence>
<evidence type="ECO:0000312" key="8">
    <source>
        <dbReference type="WormBase" id="Y71D11A.5"/>
    </source>
</evidence>
<accession>Q95Y52</accession>
<reference evidence="7" key="1">
    <citation type="journal article" date="1998" name="Science">
        <title>Genome sequence of the nematode C. elegans: a platform for investigating biology.</title>
        <authorList>
            <consortium name="The C. elegans sequencing consortium"/>
        </authorList>
    </citation>
    <scope>NUCLEOTIDE SEQUENCE [LARGE SCALE GENOMIC DNA]</scope>
    <source>
        <strain evidence="7">Bristol N2</strain>
    </source>
</reference>
<reference evidence="6" key="2">
    <citation type="journal article" date="2016" name="Elife">
        <title>Release-dependent feedback inhibition by a presynaptically localized ligand-gated anion channel.</title>
        <authorList>
            <person name="Takayanagi-Kiya S."/>
            <person name="Zhou K."/>
            <person name="Jin Y."/>
        </authorList>
    </citation>
    <scope>FUNCTION</scope>
    <scope>SUBCELLULAR LOCATION</scope>
    <scope>TISSUE SPECIFICITY</scope>
    <scope>DEVELOPMENTAL STAGE</scope>
    <scope>DISRUPTION PHENOTYPE</scope>
    <scope>MUTAGENESIS OF 301-PRO--ALA-302 AND MET-314</scope>
</reference>
<feature type="signal peptide" evidence="2">
    <location>
        <begin position="1"/>
        <end position="18"/>
    </location>
</feature>
<feature type="chain" id="PRO_5004322281" description="Probable ligand-gated ion channel 46" evidence="6">
    <location>
        <begin position="19"/>
        <end position="508"/>
    </location>
</feature>
<feature type="topological domain" description="Extracellular" evidence="6">
    <location>
        <begin position="19"/>
        <end position="274"/>
    </location>
</feature>
<feature type="transmembrane region" description="Helical" evidence="2">
    <location>
        <begin position="275"/>
        <end position="295"/>
    </location>
</feature>
<feature type="topological domain" description="Cytoplasmic" evidence="6">
    <location>
        <begin position="296"/>
        <end position="301"/>
    </location>
</feature>
<feature type="transmembrane region" description="Helical" evidence="2">
    <location>
        <begin position="302"/>
        <end position="321"/>
    </location>
</feature>
<feature type="topological domain" description="Extracellular" evidence="6">
    <location>
        <begin position="322"/>
        <end position="335"/>
    </location>
</feature>
<feature type="transmembrane region" description="Helical" evidence="2">
    <location>
        <begin position="336"/>
        <end position="356"/>
    </location>
</feature>
<feature type="topological domain" description="Cytoplasmic" evidence="6">
    <location>
        <begin position="357"/>
        <end position="480"/>
    </location>
</feature>
<feature type="transmembrane region" description="Helical" evidence="2">
    <location>
        <begin position="481"/>
        <end position="501"/>
    </location>
</feature>
<feature type="topological domain" description="Extracellular" evidence="6">
    <location>
        <begin position="502"/>
        <end position="508"/>
    </location>
</feature>
<feature type="region of interest" description="Disordered" evidence="4">
    <location>
        <begin position="374"/>
        <end position="407"/>
    </location>
</feature>
<feature type="glycosylation site" description="N-linked (GlcNAc...) asparagine" evidence="3">
    <location>
        <position position="65"/>
    </location>
</feature>
<feature type="glycosylation site" description="N-linked (GlcNAc...) asparagine" evidence="3">
    <location>
        <position position="134"/>
    </location>
</feature>
<feature type="glycosylation site" description="N-linked (GlcNAc...) asparagine" evidence="3">
    <location>
        <position position="175"/>
    </location>
</feature>
<feature type="glycosylation site" description="N-linked (GlcNAc...) asparagine" evidence="3">
    <location>
        <position position="201"/>
    </location>
</feature>
<feature type="disulfide bond" evidence="1">
    <location>
        <begin position="190"/>
        <end position="204"/>
    </location>
</feature>
<feature type="mutagenesis site" description="Does not suppress the increased number of convulsions in the acr-2 (acetylcholine-gated cation channel) gain of function mutant; when associated with I-314." evidence="5">
    <original>PA</original>
    <variation>E</variation>
    <location>
        <begin position="301"/>
        <end position="302"/>
    </location>
</feature>
<feature type="mutagenesis site" description="In ju825; gain of function mutation. Irregular 'curly' body posture and slow locomotion. Slow locomotion defect suppressed in an acc-4 null background. Reduces the amplitude and suppresses synaptic vesicle release from the presynaptic membrane of cholinergic motor neurons during the late phase of synaptic transmission. Fully suppresses sensitivity to the acetylcholine esterase inhibitor aldicarb in lgc-46 null mutants. Suppresses the increased number of convulsions in the double acr-2 gain of function and acc-4 null mutant background. Does not suppress the increased number of convulsions in the acr-2 gain of function mutant; when associated with E-301." evidence="5">
    <original>M</original>
    <variation>I</variation>
    <location>
        <position position="314"/>
    </location>
</feature>
<name>LGC46_CAEEL</name>
<protein>
    <recommendedName>
        <fullName evidence="8">Probable ligand-gated ion channel 46</fullName>
    </recommendedName>
</protein>
<gene>
    <name evidence="8" type="primary">lgc-46</name>
    <name evidence="8" type="ORF">Y71D11A.5</name>
</gene>
<proteinExistence type="evidence at protein level"/>
<sequence length="508" mass="58461">MQYLQFLSLVVLLLMCHARKSVYRRNSPSLRRLTRNYDWEVDEHGGLKPIINPAKVERATKNCANDSFILGTIMSNYNRHKIPGGQVDVEVEVWVQEITTISDITSDFQLDIYIYETWYDPALNYAFMNPCKYNLSLNSVLLEKLWTPNSCFINSKTADIHKSPFPNIFLMIYANGTVWTNYRLKLQGPCIMDLTKFPFDNVTCSLTFESFNYNTDEVKMDWSVNGVQKMRDKMELADYELVDIHKIRTTEEYPAGYWHELTMSFEFKRRAGWYILQAYLPTYLTICISWISFALGSKAIPARTMLGVNSLLAMTFQFGNIIRNLPRVSYVKAIDVWMLSCMTFVFCSLLELAWVGYLSREEEPTSAKCLQPSAQVAPKPCHPPPVQQNANNSSVHRRQKQPKNEEESALLSLRDNDYGYIPPGFGLNGNVANAMKSFSSSCSCEPTNVVNLMLDEAETIPTSTSSSLSRKQRREILAHKIDSVSVFMFPFLFVLFNIAYWQHYLRGY</sequence>
<organism evidence="7">
    <name type="scientific">Caenorhabditis elegans</name>
    <dbReference type="NCBI Taxonomy" id="6239"/>
    <lineage>
        <taxon>Eukaryota</taxon>
        <taxon>Metazoa</taxon>
        <taxon>Ecdysozoa</taxon>
        <taxon>Nematoda</taxon>
        <taxon>Chromadorea</taxon>
        <taxon>Rhabditida</taxon>
        <taxon>Rhabditina</taxon>
        <taxon>Rhabditomorpha</taxon>
        <taxon>Rhabditoidea</taxon>
        <taxon>Rhabditidae</taxon>
        <taxon>Peloderinae</taxon>
        <taxon>Caenorhabditis</taxon>
    </lineage>
</organism>
<dbReference type="EMBL" id="BX284603">
    <property type="protein sequence ID" value="CCD72054.1"/>
    <property type="molecule type" value="Genomic_DNA"/>
</dbReference>
<dbReference type="RefSeq" id="NP_497338.2">
    <property type="nucleotide sequence ID" value="NM_064937.5"/>
</dbReference>
<dbReference type="SMR" id="Q95Y52"/>
<dbReference type="FunCoup" id="Q95Y52">
    <property type="interactions" value="75"/>
</dbReference>
<dbReference type="STRING" id="6239.Y71D11A.5.1"/>
<dbReference type="GlyCosmos" id="Q95Y52">
    <property type="glycosylation" value="4 sites, No reported glycans"/>
</dbReference>
<dbReference type="PaxDb" id="6239-Y71D11A.5"/>
<dbReference type="EnsemblMetazoa" id="Y71D11A.5.1">
    <property type="protein sequence ID" value="Y71D11A.5.1"/>
    <property type="gene ID" value="WBGene00022106"/>
</dbReference>
<dbReference type="GeneID" id="175279"/>
<dbReference type="KEGG" id="cel:CELE_Y71D11A.5"/>
<dbReference type="UCSC" id="Y71D11A.5">
    <property type="organism name" value="c. elegans"/>
</dbReference>
<dbReference type="AGR" id="WB:WBGene00022106"/>
<dbReference type="CTD" id="175279"/>
<dbReference type="WormBase" id="Y71D11A.5">
    <property type="protein sequence ID" value="CE29908"/>
    <property type="gene ID" value="WBGene00022106"/>
    <property type="gene designation" value="lgc-46"/>
</dbReference>
<dbReference type="eggNOG" id="KOG3644">
    <property type="taxonomic scope" value="Eukaryota"/>
</dbReference>
<dbReference type="HOGENOM" id="CLU_010920_1_3_1"/>
<dbReference type="InParanoid" id="Q95Y52"/>
<dbReference type="OMA" id="YWYHYLK"/>
<dbReference type="OrthoDB" id="407674at2759"/>
<dbReference type="PhylomeDB" id="Q95Y52"/>
<dbReference type="Reactome" id="R-CEL-112314">
    <property type="pathway name" value="Neurotransmitter receptors and postsynaptic signal transmission"/>
</dbReference>
<dbReference type="PRO" id="PR:Q95Y52"/>
<dbReference type="Proteomes" id="UP000001940">
    <property type="component" value="Chromosome III"/>
</dbReference>
<dbReference type="Bgee" id="WBGene00022106">
    <property type="expression patterns" value="Expressed in larva and 3 other cell types or tissues"/>
</dbReference>
<dbReference type="GO" id="GO:0030424">
    <property type="term" value="C:axon"/>
    <property type="evidence" value="ECO:0007669"/>
    <property type="project" value="UniProtKB-SubCell"/>
</dbReference>
<dbReference type="GO" id="GO:0042734">
    <property type="term" value="C:presynaptic membrane"/>
    <property type="evidence" value="ECO:0007669"/>
    <property type="project" value="UniProtKB-SubCell"/>
</dbReference>
<dbReference type="GO" id="GO:0008021">
    <property type="term" value="C:synaptic vesicle"/>
    <property type="evidence" value="ECO:0007669"/>
    <property type="project" value="UniProtKB-SubCell"/>
</dbReference>
<dbReference type="GO" id="GO:0005230">
    <property type="term" value="F:extracellular ligand-gated monoatomic ion channel activity"/>
    <property type="evidence" value="ECO:0007669"/>
    <property type="project" value="InterPro"/>
</dbReference>
<dbReference type="GO" id="GO:0004888">
    <property type="term" value="F:transmembrane signaling receptor activity"/>
    <property type="evidence" value="ECO:0007669"/>
    <property type="project" value="InterPro"/>
</dbReference>
<dbReference type="GO" id="GO:1902476">
    <property type="term" value="P:chloride transmembrane transport"/>
    <property type="evidence" value="ECO:0000318"/>
    <property type="project" value="GO_Central"/>
</dbReference>
<dbReference type="CDD" id="cd18990">
    <property type="entry name" value="LGIC_ECD_GABAAR"/>
    <property type="match status" value="1"/>
</dbReference>
<dbReference type="CDD" id="cd19049">
    <property type="entry name" value="LGIC_TM_anion"/>
    <property type="match status" value="1"/>
</dbReference>
<dbReference type="Gene3D" id="2.70.170.10">
    <property type="entry name" value="Neurotransmitter-gated ion-channel ligand-binding domain"/>
    <property type="match status" value="1"/>
</dbReference>
<dbReference type="Gene3D" id="1.20.58.390">
    <property type="entry name" value="Neurotransmitter-gated ion-channel transmembrane domain"/>
    <property type="match status" value="1"/>
</dbReference>
<dbReference type="InterPro" id="IPR006028">
    <property type="entry name" value="GABAA/Glycine_rcpt"/>
</dbReference>
<dbReference type="InterPro" id="IPR006202">
    <property type="entry name" value="Neur_chan_lig-bd"/>
</dbReference>
<dbReference type="InterPro" id="IPR036734">
    <property type="entry name" value="Neur_chan_lig-bd_sf"/>
</dbReference>
<dbReference type="InterPro" id="IPR006201">
    <property type="entry name" value="Neur_channel"/>
</dbReference>
<dbReference type="InterPro" id="IPR036719">
    <property type="entry name" value="Neuro-gated_channel_TM_sf"/>
</dbReference>
<dbReference type="InterPro" id="IPR038050">
    <property type="entry name" value="Neuro_actylchol_rec"/>
</dbReference>
<dbReference type="InterPro" id="IPR006029">
    <property type="entry name" value="Neurotrans-gated_channel_TM"/>
</dbReference>
<dbReference type="InterPro" id="IPR018000">
    <property type="entry name" value="Neurotransmitter_ion_chnl_CS"/>
</dbReference>
<dbReference type="PANTHER" id="PTHR18945">
    <property type="entry name" value="NEUROTRANSMITTER GATED ION CHANNEL"/>
    <property type="match status" value="1"/>
</dbReference>
<dbReference type="Pfam" id="PF02931">
    <property type="entry name" value="Neur_chan_LBD"/>
    <property type="match status" value="1"/>
</dbReference>
<dbReference type="Pfam" id="PF02932">
    <property type="entry name" value="Neur_chan_memb"/>
    <property type="match status" value="1"/>
</dbReference>
<dbReference type="PRINTS" id="PR00253">
    <property type="entry name" value="GABAARECEPTR"/>
</dbReference>
<dbReference type="PRINTS" id="PR00252">
    <property type="entry name" value="NRIONCHANNEL"/>
</dbReference>
<dbReference type="SUPFAM" id="SSF90112">
    <property type="entry name" value="Neurotransmitter-gated ion-channel transmembrane pore"/>
    <property type="match status" value="1"/>
</dbReference>
<dbReference type="SUPFAM" id="SSF63712">
    <property type="entry name" value="Nicotinic receptor ligand binding domain-like"/>
    <property type="match status" value="1"/>
</dbReference>
<dbReference type="PROSITE" id="PS00236">
    <property type="entry name" value="NEUROTR_ION_CHANNEL"/>
    <property type="match status" value="1"/>
</dbReference>